<protein>
    <recommendedName>
        <fullName evidence="2">Sulfate adenylyltransferase subunit 1</fullName>
        <ecNumber evidence="2">2.7.7.4</ecNumber>
    </recommendedName>
    <alternativeName>
        <fullName evidence="2">ATP-sulfurylase large subunit</fullName>
    </alternativeName>
    <alternativeName>
        <fullName evidence="2">Sulfate adenylate transferase</fullName>
        <shortName evidence="2">SAT</shortName>
    </alternativeName>
</protein>
<comment type="function">
    <text evidence="2">With CysD forms the ATP sulfurylase (ATPS) that catalyzes the adenylation of sulfate producing adenosine 5'-phosphosulfate (APS) and diphosphate, the first enzymatic step in sulfur assimilation pathway. APS synthesis involves the formation of a high-energy phosphoric-sulfuric acid anhydride bond driven by GTP hydrolysis by CysN coupled to ATP hydrolysis by CysD.</text>
</comment>
<comment type="catalytic activity">
    <reaction evidence="2">
        <text>sulfate + ATP + H(+) = adenosine 5'-phosphosulfate + diphosphate</text>
        <dbReference type="Rhea" id="RHEA:18133"/>
        <dbReference type="ChEBI" id="CHEBI:15378"/>
        <dbReference type="ChEBI" id="CHEBI:16189"/>
        <dbReference type="ChEBI" id="CHEBI:30616"/>
        <dbReference type="ChEBI" id="CHEBI:33019"/>
        <dbReference type="ChEBI" id="CHEBI:58243"/>
        <dbReference type="EC" id="2.7.7.4"/>
    </reaction>
</comment>
<comment type="pathway">
    <text evidence="2">Sulfur metabolism; hydrogen sulfide biosynthesis; sulfite from sulfate: step 1/3.</text>
</comment>
<comment type="subunit">
    <text evidence="2">Heterodimer composed of CysD, the smaller subunit, and CysN.</text>
</comment>
<comment type="similarity">
    <text evidence="2">Belongs to the TRAFAC class translation factor GTPase superfamily. Classic translation factor GTPase family. CysN/NodQ subfamily.</text>
</comment>
<keyword id="KW-0067">ATP-binding</keyword>
<keyword id="KW-0342">GTP-binding</keyword>
<keyword id="KW-0547">Nucleotide-binding</keyword>
<keyword id="KW-0548">Nucleotidyltransferase</keyword>
<keyword id="KW-1185">Reference proteome</keyword>
<keyword id="KW-0808">Transferase</keyword>
<proteinExistence type="inferred from homology"/>
<accession>A1ST27</accession>
<sequence length="469" mass="52610">MSNDSNLLATDIEEYLRVHENKDLMRFITCGSVDDGKSTLIGRLLFDSKMIFEDHMAAIEKDSKKFNTTDNDFDLSLLVDGLQSEREQGITIDVAYRYFATEQRKFIIADTPGHEQYTRNMVTGASTCDLAIILIDARYGVQVQTRRHSYICSLLGIKHLVVAVNKMDAVDYDQAVYKKIKADYREFAKQLNIADIRFVPISALKGDNVVNESENMTWYPGSPLLRLLNTIQIDTDINDKFRLAVQYVNRPNLDFRGFCGTVASGEIRVGDTIQALPSGKQSKVKSIVTFDGELESAFAGMAITLTLEDEIDISRGNMIVRPHEKPTSSKNFVADLVWMTEEALHVDREYIIKAGAHSTFGSVISINNKVDVNTMEKCEANQLVLNEIGSCNFEVAEALHFDRYSENRATGAFIMIDRLTNATVGAGMISGSVEALAKTAPEYSAFEVEFNALVRKHYPHWETKDITKL</sequence>
<dbReference type="EC" id="2.7.7.4" evidence="2"/>
<dbReference type="EMBL" id="CP000510">
    <property type="protein sequence ID" value="ABM02642.1"/>
    <property type="molecule type" value="Genomic_DNA"/>
</dbReference>
<dbReference type="RefSeq" id="WP_011769205.1">
    <property type="nucleotide sequence ID" value="NC_008709.1"/>
</dbReference>
<dbReference type="SMR" id="A1ST27"/>
<dbReference type="STRING" id="357804.Ping_0798"/>
<dbReference type="KEGG" id="pin:Ping_0798"/>
<dbReference type="eggNOG" id="COG2895">
    <property type="taxonomic scope" value="Bacteria"/>
</dbReference>
<dbReference type="HOGENOM" id="CLU_007265_5_2_6"/>
<dbReference type="OrthoDB" id="9804504at2"/>
<dbReference type="UniPathway" id="UPA00140">
    <property type="reaction ID" value="UER00204"/>
</dbReference>
<dbReference type="Proteomes" id="UP000000639">
    <property type="component" value="Chromosome"/>
</dbReference>
<dbReference type="GO" id="GO:0005524">
    <property type="term" value="F:ATP binding"/>
    <property type="evidence" value="ECO:0007669"/>
    <property type="project" value="UniProtKB-KW"/>
</dbReference>
<dbReference type="GO" id="GO:0005525">
    <property type="term" value="F:GTP binding"/>
    <property type="evidence" value="ECO:0007669"/>
    <property type="project" value="UniProtKB-UniRule"/>
</dbReference>
<dbReference type="GO" id="GO:0003924">
    <property type="term" value="F:GTPase activity"/>
    <property type="evidence" value="ECO:0007669"/>
    <property type="project" value="InterPro"/>
</dbReference>
<dbReference type="GO" id="GO:0004781">
    <property type="term" value="F:sulfate adenylyltransferase (ATP) activity"/>
    <property type="evidence" value="ECO:0007669"/>
    <property type="project" value="UniProtKB-UniRule"/>
</dbReference>
<dbReference type="GO" id="GO:0070814">
    <property type="term" value="P:hydrogen sulfide biosynthetic process"/>
    <property type="evidence" value="ECO:0007669"/>
    <property type="project" value="UniProtKB-UniRule"/>
</dbReference>
<dbReference type="GO" id="GO:0000103">
    <property type="term" value="P:sulfate assimilation"/>
    <property type="evidence" value="ECO:0007669"/>
    <property type="project" value="UniProtKB-UniRule"/>
</dbReference>
<dbReference type="CDD" id="cd04166">
    <property type="entry name" value="CysN_ATPS"/>
    <property type="match status" value="1"/>
</dbReference>
<dbReference type="CDD" id="cd03695">
    <property type="entry name" value="CysN_NodQ_II"/>
    <property type="match status" value="1"/>
</dbReference>
<dbReference type="CDD" id="cd04095">
    <property type="entry name" value="CysN_NoDQ_III"/>
    <property type="match status" value="1"/>
</dbReference>
<dbReference type="FunFam" id="2.40.30.10:FF:000027">
    <property type="entry name" value="Sulfate adenylyltransferase subunit 1"/>
    <property type="match status" value="1"/>
</dbReference>
<dbReference type="FunFam" id="3.40.50.300:FF:000119">
    <property type="entry name" value="Sulfate adenylyltransferase subunit 1"/>
    <property type="match status" value="1"/>
</dbReference>
<dbReference type="Gene3D" id="3.40.50.300">
    <property type="entry name" value="P-loop containing nucleotide triphosphate hydrolases"/>
    <property type="match status" value="1"/>
</dbReference>
<dbReference type="Gene3D" id="2.40.30.10">
    <property type="entry name" value="Translation factors"/>
    <property type="match status" value="2"/>
</dbReference>
<dbReference type="HAMAP" id="MF_00062">
    <property type="entry name" value="Sulf_adenylyltr_sub1"/>
    <property type="match status" value="1"/>
</dbReference>
<dbReference type="InterPro" id="IPR041757">
    <property type="entry name" value="CysN_GTP-bd"/>
</dbReference>
<dbReference type="InterPro" id="IPR044138">
    <property type="entry name" value="CysN_II"/>
</dbReference>
<dbReference type="InterPro" id="IPR044139">
    <property type="entry name" value="CysN_NoDQ_III"/>
</dbReference>
<dbReference type="InterPro" id="IPR031157">
    <property type="entry name" value="G_TR_CS"/>
</dbReference>
<dbReference type="InterPro" id="IPR054696">
    <property type="entry name" value="GTP-eEF1A_C"/>
</dbReference>
<dbReference type="InterPro" id="IPR027417">
    <property type="entry name" value="P-loop_NTPase"/>
</dbReference>
<dbReference type="InterPro" id="IPR005225">
    <property type="entry name" value="Small_GTP-bd"/>
</dbReference>
<dbReference type="InterPro" id="IPR011779">
    <property type="entry name" value="SO4_adenylTrfase_lsu"/>
</dbReference>
<dbReference type="InterPro" id="IPR000795">
    <property type="entry name" value="T_Tr_GTP-bd_dom"/>
</dbReference>
<dbReference type="InterPro" id="IPR050100">
    <property type="entry name" value="TRAFAC_GTPase_members"/>
</dbReference>
<dbReference type="InterPro" id="IPR009000">
    <property type="entry name" value="Transl_B-barrel_sf"/>
</dbReference>
<dbReference type="InterPro" id="IPR009001">
    <property type="entry name" value="Transl_elong_EF1A/Init_IF2_C"/>
</dbReference>
<dbReference type="NCBIfam" id="TIGR02034">
    <property type="entry name" value="CysN"/>
    <property type="match status" value="1"/>
</dbReference>
<dbReference type="NCBIfam" id="NF003478">
    <property type="entry name" value="PRK05124.1"/>
    <property type="match status" value="1"/>
</dbReference>
<dbReference type="NCBIfam" id="NF004035">
    <property type="entry name" value="PRK05506.1"/>
    <property type="match status" value="1"/>
</dbReference>
<dbReference type="NCBIfam" id="TIGR00231">
    <property type="entry name" value="small_GTP"/>
    <property type="match status" value="1"/>
</dbReference>
<dbReference type="PANTHER" id="PTHR23115">
    <property type="entry name" value="TRANSLATION FACTOR"/>
    <property type="match status" value="1"/>
</dbReference>
<dbReference type="Pfam" id="PF22594">
    <property type="entry name" value="GTP-eEF1A_C"/>
    <property type="match status" value="1"/>
</dbReference>
<dbReference type="Pfam" id="PF00009">
    <property type="entry name" value="GTP_EFTU"/>
    <property type="match status" value="1"/>
</dbReference>
<dbReference type="PRINTS" id="PR00315">
    <property type="entry name" value="ELONGATNFCT"/>
</dbReference>
<dbReference type="SUPFAM" id="SSF50465">
    <property type="entry name" value="EF-Tu/eEF-1alpha/eIF2-gamma C-terminal domain"/>
    <property type="match status" value="1"/>
</dbReference>
<dbReference type="SUPFAM" id="SSF52540">
    <property type="entry name" value="P-loop containing nucleoside triphosphate hydrolases"/>
    <property type="match status" value="1"/>
</dbReference>
<dbReference type="SUPFAM" id="SSF50447">
    <property type="entry name" value="Translation proteins"/>
    <property type="match status" value="1"/>
</dbReference>
<dbReference type="PROSITE" id="PS00301">
    <property type="entry name" value="G_TR_1"/>
    <property type="match status" value="1"/>
</dbReference>
<dbReference type="PROSITE" id="PS51722">
    <property type="entry name" value="G_TR_2"/>
    <property type="match status" value="1"/>
</dbReference>
<feature type="chain" id="PRO_1000092150" description="Sulfate adenylyltransferase subunit 1">
    <location>
        <begin position="1"/>
        <end position="469"/>
    </location>
</feature>
<feature type="domain" description="tr-type G">
    <location>
        <begin position="22"/>
        <end position="224"/>
    </location>
</feature>
<feature type="region of interest" description="G1" evidence="1">
    <location>
        <begin position="31"/>
        <end position="38"/>
    </location>
</feature>
<feature type="region of interest" description="G2" evidence="1">
    <location>
        <begin position="89"/>
        <end position="93"/>
    </location>
</feature>
<feature type="region of interest" description="G3" evidence="1">
    <location>
        <begin position="110"/>
        <end position="113"/>
    </location>
</feature>
<feature type="region of interest" description="G4" evidence="1">
    <location>
        <begin position="165"/>
        <end position="168"/>
    </location>
</feature>
<feature type="region of interest" description="G5" evidence="1">
    <location>
        <begin position="202"/>
        <end position="204"/>
    </location>
</feature>
<feature type="binding site" evidence="2">
    <location>
        <begin position="31"/>
        <end position="38"/>
    </location>
    <ligand>
        <name>GTP</name>
        <dbReference type="ChEBI" id="CHEBI:37565"/>
    </ligand>
</feature>
<feature type="binding site" evidence="2">
    <location>
        <begin position="110"/>
        <end position="114"/>
    </location>
    <ligand>
        <name>GTP</name>
        <dbReference type="ChEBI" id="CHEBI:37565"/>
    </ligand>
</feature>
<feature type="binding site" evidence="2">
    <location>
        <begin position="165"/>
        <end position="168"/>
    </location>
    <ligand>
        <name>GTP</name>
        <dbReference type="ChEBI" id="CHEBI:37565"/>
    </ligand>
</feature>
<organism>
    <name type="scientific">Psychromonas ingrahamii (strain DSM 17664 / CCUG 51855 / 37)</name>
    <dbReference type="NCBI Taxonomy" id="357804"/>
    <lineage>
        <taxon>Bacteria</taxon>
        <taxon>Pseudomonadati</taxon>
        <taxon>Pseudomonadota</taxon>
        <taxon>Gammaproteobacteria</taxon>
        <taxon>Alteromonadales</taxon>
        <taxon>Psychromonadaceae</taxon>
        <taxon>Psychromonas</taxon>
    </lineage>
</organism>
<evidence type="ECO:0000250" key="1"/>
<evidence type="ECO:0000255" key="2">
    <source>
        <dbReference type="HAMAP-Rule" id="MF_00062"/>
    </source>
</evidence>
<reference key="1">
    <citation type="journal article" date="2008" name="BMC Genomics">
        <title>Genomics of an extreme psychrophile, Psychromonas ingrahamii.</title>
        <authorList>
            <person name="Riley M."/>
            <person name="Staley J.T."/>
            <person name="Danchin A."/>
            <person name="Wang T.Z."/>
            <person name="Brettin T.S."/>
            <person name="Hauser L.J."/>
            <person name="Land M.L."/>
            <person name="Thompson L.S."/>
        </authorList>
    </citation>
    <scope>NUCLEOTIDE SEQUENCE [LARGE SCALE GENOMIC DNA]</scope>
    <source>
        <strain>DSM 17664 / CCUG 51855 / 37</strain>
    </source>
</reference>
<name>CYSN_PSYIN</name>
<gene>
    <name evidence="2" type="primary">cysN</name>
    <name type="ordered locus">Ping_0798</name>
</gene>